<feature type="chain" id="PRO_0000080622" description="Ubiquitin carboxyl-terminal hydrolase 4">
    <location>
        <begin position="1"/>
        <end position="962"/>
    </location>
</feature>
<feature type="domain" description="DUSP" evidence="4">
    <location>
        <begin position="11"/>
        <end position="122"/>
    </location>
</feature>
<feature type="domain" description="Ubiquitin-like 1" evidence="3">
    <location>
        <begin position="142"/>
        <end position="226"/>
    </location>
</feature>
<feature type="domain" description="USP" evidence="5">
    <location>
        <begin position="302"/>
        <end position="922"/>
    </location>
</feature>
<feature type="domain" description="Ubiquitin-like 2" evidence="3">
    <location>
        <begin position="483"/>
        <end position="571"/>
    </location>
</feature>
<feature type="region of interest" description="Necessary for interaction with SART3" evidence="2">
    <location>
        <begin position="27"/>
        <end position="216"/>
    </location>
</feature>
<feature type="region of interest" description="Disordered" evidence="6">
    <location>
        <begin position="220"/>
        <end position="249"/>
    </location>
</feature>
<feature type="region of interest" description="Required for USP4 activation by providing conformational flexibility between the DUSP and catalytic domains" evidence="2">
    <location>
        <begin position="229"/>
        <end position="295"/>
    </location>
</feature>
<feature type="region of interest" description="Regulates ubiquitin dissociation" evidence="2">
    <location>
        <begin position="384"/>
        <end position="386"/>
    </location>
</feature>
<feature type="region of interest" description="Necessary for interaction with RBL2" evidence="7">
    <location>
        <begin position="405"/>
        <end position="407"/>
    </location>
</feature>
<feature type="region of interest" description="Necessary for interaction with RB1 and RBL2" evidence="7">
    <location>
        <begin position="459"/>
        <end position="463"/>
    </location>
</feature>
<feature type="region of interest" description="Interacts with DUSP and ubiquitin-like 1 domains and is required for USP4 activation" evidence="2">
    <location>
        <begin position="485"/>
        <end position="774"/>
    </location>
</feature>
<feature type="region of interest" description="Disordered" evidence="6">
    <location>
        <begin position="638"/>
        <end position="699"/>
    </location>
</feature>
<feature type="region of interest" description="Disordered" evidence="6">
    <location>
        <begin position="928"/>
        <end position="962"/>
    </location>
</feature>
<feature type="short sequence motif" description="Nuclear export signal" evidence="8">
    <location>
        <begin position="133"/>
        <end position="141"/>
    </location>
</feature>
<feature type="short sequence motif" description="Nuclear localization signal" evidence="8">
    <location>
        <begin position="766"/>
        <end position="771"/>
    </location>
</feature>
<feature type="compositionally biased region" description="Polar residues" evidence="6">
    <location>
        <begin position="225"/>
        <end position="249"/>
    </location>
</feature>
<feature type="compositionally biased region" description="Acidic residues" evidence="6">
    <location>
        <begin position="657"/>
        <end position="666"/>
    </location>
</feature>
<feature type="compositionally biased region" description="Low complexity" evidence="6">
    <location>
        <begin position="928"/>
        <end position="937"/>
    </location>
</feature>
<feature type="compositionally biased region" description="Acidic residues" evidence="6">
    <location>
        <begin position="952"/>
        <end position="962"/>
    </location>
</feature>
<feature type="active site" description="Nucleophile" evidence="5">
    <location>
        <position position="311"/>
    </location>
</feature>
<feature type="active site" description="Proton acceptor" evidence="5">
    <location>
        <position position="880"/>
    </location>
</feature>
<feature type="binding site" evidence="2">
    <location>
        <position position="461"/>
    </location>
    <ligand>
        <name>Zn(2+)</name>
        <dbReference type="ChEBI" id="CHEBI:29105"/>
    </ligand>
</feature>
<feature type="binding site" evidence="2">
    <location>
        <position position="464"/>
    </location>
    <ligand>
        <name>Zn(2+)</name>
        <dbReference type="ChEBI" id="CHEBI:29105"/>
    </ligand>
</feature>
<feature type="binding site" evidence="2">
    <location>
        <position position="798"/>
    </location>
    <ligand>
        <name>Zn(2+)</name>
        <dbReference type="ChEBI" id="CHEBI:29105"/>
    </ligand>
</feature>
<feature type="binding site" evidence="2">
    <location>
        <position position="801"/>
    </location>
    <ligand>
        <name>Zn(2+)</name>
        <dbReference type="ChEBI" id="CHEBI:29105"/>
    </ligand>
</feature>
<feature type="modified residue" description="Phosphoserine" evidence="2">
    <location>
        <position position="445"/>
    </location>
</feature>
<feature type="modified residue" description="Phosphoserine" evidence="1">
    <location>
        <position position="655"/>
    </location>
</feature>
<feature type="modified residue" description="Phosphoserine" evidence="10">
    <location>
        <position position="675"/>
    </location>
</feature>
<feature type="modified residue" description="Phosphoserine" evidence="10">
    <location>
        <position position="680"/>
    </location>
</feature>
<feature type="mutagenesis site" description="Reduces the interaction with RB1." evidence="7">
    <original>C</original>
    <variation>Q</variation>
    <location>
        <position position="461"/>
    </location>
</feature>
<feature type="mutagenesis site" description="Reduces nuclear localization." evidence="8">
    <original>KK</original>
    <variation>NS</variation>
    <location>
        <begin position="770"/>
        <end position="771"/>
    </location>
</feature>
<feature type="sequence conflict" description="In Ref. 1; AAB82339 and 2; AAC53587." evidence="9" ref="1 2">
    <original>EH</original>
    <variation>DD</variation>
    <location>
        <begin position="123"/>
        <end position="124"/>
    </location>
</feature>
<feature type="sequence conflict" description="In Ref. 1; AAB82339." evidence="9" ref="1">
    <original>P</original>
    <variation>A</variation>
    <location>
        <position position="292"/>
    </location>
</feature>
<feature type="helix" evidence="11">
    <location>
        <begin position="13"/>
        <end position="21"/>
    </location>
</feature>
<feature type="turn" evidence="11">
    <location>
        <begin position="22"/>
        <end position="25"/>
    </location>
</feature>
<feature type="strand" evidence="11">
    <location>
        <begin position="33"/>
        <end position="38"/>
    </location>
</feature>
<feature type="helix" evidence="11">
    <location>
        <begin position="39"/>
        <end position="49"/>
    </location>
</feature>
<feature type="strand" evidence="11">
    <location>
        <begin position="51"/>
        <end position="53"/>
    </location>
</feature>
<feature type="turn" evidence="11">
    <location>
        <begin position="56"/>
        <end position="60"/>
    </location>
</feature>
<feature type="helix" evidence="11">
    <location>
        <begin position="62"/>
        <end position="64"/>
    </location>
</feature>
<feature type="helix" evidence="11">
    <location>
        <begin position="72"/>
        <end position="74"/>
    </location>
</feature>
<feature type="strand" evidence="11">
    <location>
        <begin position="75"/>
        <end position="77"/>
    </location>
</feature>
<feature type="turn" evidence="11">
    <location>
        <begin position="78"/>
        <end position="81"/>
    </location>
</feature>
<feature type="turn" evidence="11">
    <location>
        <begin position="89"/>
        <end position="91"/>
    </location>
</feature>
<feature type="strand" evidence="11">
    <location>
        <begin position="92"/>
        <end position="97"/>
    </location>
</feature>
<feature type="helix" evidence="11">
    <location>
        <begin position="98"/>
        <end position="108"/>
    </location>
</feature>
<feature type="strand" evidence="11">
    <location>
        <begin position="118"/>
        <end position="124"/>
    </location>
</feature>
<feature type="strand" evidence="11">
    <location>
        <begin position="126"/>
        <end position="128"/>
    </location>
</feature>
<feature type="strand" evidence="11">
    <location>
        <begin position="130"/>
        <end position="133"/>
    </location>
</feature>
<feature type="strand" evidence="11">
    <location>
        <begin position="138"/>
        <end position="144"/>
    </location>
</feature>
<feature type="strand" evidence="11">
    <location>
        <begin position="147"/>
        <end position="156"/>
    </location>
</feature>
<feature type="helix" evidence="11">
    <location>
        <begin position="162"/>
        <end position="172"/>
    </location>
</feature>
<feature type="strand" evidence="11">
    <location>
        <begin position="181"/>
        <end position="185"/>
    </location>
</feature>
<feature type="strand" evidence="11">
    <location>
        <begin position="187"/>
        <end position="191"/>
    </location>
</feature>
<feature type="turn" evidence="11">
    <location>
        <begin position="202"/>
        <end position="206"/>
    </location>
</feature>
<feature type="strand" evidence="11">
    <location>
        <begin position="211"/>
        <end position="217"/>
    </location>
</feature>
<protein>
    <recommendedName>
        <fullName>Ubiquitin carboxyl-terminal hydrolase 4</fullName>
        <ecNumber evidence="2">3.4.19.12</ecNumber>
    </recommendedName>
    <alternativeName>
        <fullName>Deubiquitinating enzyme 4</fullName>
    </alternativeName>
    <alternativeName>
        <fullName>Ubiquitin thioesterase 4</fullName>
    </alternativeName>
    <alternativeName>
        <fullName>Ubiquitin-specific-processing protease 4</fullName>
    </alternativeName>
    <alternativeName>
        <fullName>Ubiquitous nuclear protein</fullName>
    </alternativeName>
</protein>
<comment type="function">
    <text evidence="2">Deubiquitinating enzyme that removes conjugated ubiquitin from target proteins (By similarity). Deubiquitinates PDPK1 (By similarity). Deubiquitinates TRIM21 (By similarity). Deubiquitinates receptor ADORA2A which increases the amount of functional receptor at the cell surface (By similarity). Deubiquitinates HAS2 (By similarity). Deubiquitinates RHEB in response to EGF signaling, promoting mTORC1 signaling (By similarity). May regulate mRNA splicing through deubiquitination of the U4 spliceosomal protein PRPF3 (By similarity). This may prevent its recognition by the U5 component PRPF8 thereby destabilizing interactions within the U4/U6.U5 snRNP (By similarity). May also play a role in the regulation of quality control in the ER (By similarity).</text>
</comment>
<comment type="catalytic activity">
    <reaction evidence="2">
        <text>Thiol-dependent hydrolysis of ester, thioester, amide, peptide and isopeptide bonds formed by the C-terminal Gly of ubiquitin (a 76-residue protein attached to proteins as an intracellular targeting signal).</text>
        <dbReference type="EC" id="3.4.19.12"/>
    </reaction>
</comment>
<comment type="activity regulation">
    <text evidence="2">The completion of the deubiquitinase reaction is mediated by the DUSP and ubiquitin-like 1 domains which promotes the release of ubiquitin from the catalytic site enabling subsequent reactions to occur.</text>
</comment>
<comment type="subunit">
    <text evidence="2 7">Interacts with RB1 (both dephosphorylated and hypophosphorylated forms) (PubMed:11571651). Interacts with RBL1 and RBL2 (PubMed:11571651). Interacts with ADORA2A (via cytoplasmic C-terminus); the interaction is direct. Interacts with SART3; recruits USP4 to its substrate PRPF3 (By similarity).</text>
</comment>
<comment type="subcellular location">
    <subcellularLocation>
        <location evidence="8">Cytoplasm</location>
    </subcellularLocation>
    <subcellularLocation>
        <location evidence="8">Nucleus</location>
    </subcellularLocation>
    <text evidence="8">Shuttles between the nucleus and cytoplasm. Exported to the cytoplasm in a CRM1-dependent manner and recycled back to the nucleus via the importin alpha/beta heterodimeric import receptor.</text>
</comment>
<comment type="tissue specificity">
    <text evidence="8">Expressed in brain, kidney, liver and spleen (at protein level).</text>
</comment>
<comment type="developmental stage">
    <text>Overexpression leads to oncogenic transformation of NIH 3T3 cells.</text>
</comment>
<comment type="domain">
    <text evidence="2">The DUSP and ubiquitin-like 1 domains promote ubiquitin release and thus enhance USB4 catalytic activity. However, these domains do not bind ubiquitin.</text>
</comment>
<comment type="PTM">
    <text evidence="2">Phosphorylated at Ser-445 by PKB/AKT1 in response to EGF stimulus, promoting its ability deubiquitinate RHEB.</text>
</comment>
<comment type="PTM">
    <text evidence="2">Monoubiquitinated by TRIM21. Ubiquitination does not lead to its proteasomal degradation. Autodeubiquitinated.</text>
</comment>
<comment type="similarity">
    <text evidence="9">Belongs to the peptidase C19 family. USP4 subfamily.</text>
</comment>
<gene>
    <name type="primary">Usp4</name>
    <name type="synonym">Unp</name>
</gene>
<sequence length="962" mass="108343">MAEGRGSRERPDVETQKTELGALMGTTLQRGAQWYLIDSRWFKQWKKYVGFDSWDMYNVGEHNLFPGPIDNSGLFSDPESQTLKEHLIDELDYVLVPAEAWNKLLNWYGCVEGQQPIVRKVVEHGLFVKHCKVEVYLLELKLCENSDPTNVLSCHFSKADTIATIEKEMRKLFNIPAERETRLWNKYMSNTYEQLSKLDNTIQDAGLYQGQVLVIEPQNEDGTWPRQSLQSKSSTAPSRNFTTSSKPSASPYCSVSASLIANGDSTNSSGMHSSGVSRGGSGFSASYNCQEPPSPHIQPGLCGLGNLGNTCFMNSALQCLSNTAPLTEYFLKDEYEAEINRDNPLGMKGEIAEAYAELIKQMWSGRDTHVAPRMFKTQVGRFAPQFSGYQQQDSQELLAFILDGLHEDLNRVKKKPYLEPKDANGRPDAVVAKEAWENHRLRNDSVIVDTFHGLFKSTLVCPECAKVSVTFDPFCYLTLPLPLKKDRIMEVFLVPADPQCRPIQYRVTVPLMGAISDLCEALSKLSGIAAENMVVTDVYNHRFHKIFQMDEGLSHITPRDDIFVYEVCNTSMDGSECITLPVYFREKKSRPSSASSGAVLYGQPLLVSVPKHKLTLESLYQAVCDRISRYIKQPLPDEFLSSPLEPGACNGSRSSYEGDEEEEMDHQEEGKEQLSEVEGSGEDDQGDDHSESAQKVKGQPRHKRLFTFSLVNSCGTADINSLATDGKLLKLNSRSTLAIDWDSETRSLYFDEQESEACEKHLSMSQPQKKKKAAVALRECIELFTTMETLGEHDPWYCPTCKKHQQATKKFDLWSLPKILVVHLKRFSYNRYWRDKLDTVVEFPVRALNMSEFVCDRSARPYVYDLIAVSNHYGAMGVGHYTAYAKNRLNGKWYYFDDSSVSLASEDQIVTKAAYVLFYQRRDDECSSTSSLGSFPGSDGGVKLSSSHQGMGDEEAYNMDTN</sequence>
<name>UBP4_MOUSE</name>
<accession>P35123</accession>
<accession>O54704</accession>
<accession>Q8BTL9</accession>
<keyword id="KW-0002">3D-structure</keyword>
<keyword id="KW-0963">Cytoplasm</keyword>
<keyword id="KW-0378">Hydrolase</keyword>
<keyword id="KW-0479">Metal-binding</keyword>
<keyword id="KW-0539">Nucleus</keyword>
<keyword id="KW-0597">Phosphoprotein</keyword>
<keyword id="KW-0645">Protease</keyword>
<keyword id="KW-0656">Proto-oncogene</keyword>
<keyword id="KW-1185">Reference proteome</keyword>
<keyword id="KW-0677">Repeat</keyword>
<keyword id="KW-0788">Thiol protease</keyword>
<keyword id="KW-0832">Ubl conjugation</keyword>
<keyword id="KW-0833">Ubl conjugation pathway</keyword>
<keyword id="KW-0862">Zinc</keyword>
<reference key="1">
    <citation type="journal article" date="1993" name="Oncogene">
        <title>Unp, a mouse gene related to the tre oncogene.</title>
        <authorList>
            <person name="Gupta K."/>
            <person name="Copeland N.G."/>
            <person name="Gilbert D.J."/>
            <person name="Jenkins N.A."/>
            <person name="Gray D.A."/>
        </authorList>
    </citation>
    <scope>PRELIMINARY NUCLEOTIDE SEQUENCE [MRNA]</scope>
</reference>
<reference key="2">
    <citation type="journal article" date="1998" name="Biochim. Biophys. Acta">
        <title>Genomic structure of Unp, a murine gene encoding a ubiquitin-specific protease.</title>
        <authorList>
            <person name="di Fruscio M."/>
            <person name="Gilchrist C.A."/>
            <person name="Baker R.T."/>
            <person name="Gray D.A."/>
        </authorList>
    </citation>
    <scope>NUCLEOTIDE SEQUENCE [GENOMIC DNA]</scope>
    <source>
        <strain>129</strain>
        <tissue>Testis</tissue>
    </source>
</reference>
<reference key="3">
    <citation type="journal article" date="2005" name="Science">
        <title>The transcriptional landscape of the mammalian genome.</title>
        <authorList>
            <person name="Carninci P."/>
            <person name="Kasukawa T."/>
            <person name="Katayama S."/>
            <person name="Gough J."/>
            <person name="Frith M.C."/>
            <person name="Maeda N."/>
            <person name="Oyama R."/>
            <person name="Ravasi T."/>
            <person name="Lenhard B."/>
            <person name="Wells C."/>
            <person name="Kodzius R."/>
            <person name="Shimokawa K."/>
            <person name="Bajic V.B."/>
            <person name="Brenner S.E."/>
            <person name="Batalov S."/>
            <person name="Forrest A.R."/>
            <person name="Zavolan M."/>
            <person name="Davis M.J."/>
            <person name="Wilming L.G."/>
            <person name="Aidinis V."/>
            <person name="Allen J.E."/>
            <person name="Ambesi-Impiombato A."/>
            <person name="Apweiler R."/>
            <person name="Aturaliya R.N."/>
            <person name="Bailey T.L."/>
            <person name="Bansal M."/>
            <person name="Baxter L."/>
            <person name="Beisel K.W."/>
            <person name="Bersano T."/>
            <person name="Bono H."/>
            <person name="Chalk A.M."/>
            <person name="Chiu K.P."/>
            <person name="Choudhary V."/>
            <person name="Christoffels A."/>
            <person name="Clutterbuck D.R."/>
            <person name="Crowe M.L."/>
            <person name="Dalla E."/>
            <person name="Dalrymple B.P."/>
            <person name="de Bono B."/>
            <person name="Della Gatta G."/>
            <person name="di Bernardo D."/>
            <person name="Down T."/>
            <person name="Engstrom P."/>
            <person name="Fagiolini M."/>
            <person name="Faulkner G."/>
            <person name="Fletcher C.F."/>
            <person name="Fukushima T."/>
            <person name="Furuno M."/>
            <person name="Futaki S."/>
            <person name="Gariboldi M."/>
            <person name="Georgii-Hemming P."/>
            <person name="Gingeras T.R."/>
            <person name="Gojobori T."/>
            <person name="Green R.E."/>
            <person name="Gustincich S."/>
            <person name="Harbers M."/>
            <person name="Hayashi Y."/>
            <person name="Hensch T.K."/>
            <person name="Hirokawa N."/>
            <person name="Hill D."/>
            <person name="Huminiecki L."/>
            <person name="Iacono M."/>
            <person name="Ikeo K."/>
            <person name="Iwama A."/>
            <person name="Ishikawa T."/>
            <person name="Jakt M."/>
            <person name="Kanapin A."/>
            <person name="Katoh M."/>
            <person name="Kawasawa Y."/>
            <person name="Kelso J."/>
            <person name="Kitamura H."/>
            <person name="Kitano H."/>
            <person name="Kollias G."/>
            <person name="Krishnan S.P."/>
            <person name="Kruger A."/>
            <person name="Kummerfeld S.K."/>
            <person name="Kurochkin I.V."/>
            <person name="Lareau L.F."/>
            <person name="Lazarevic D."/>
            <person name="Lipovich L."/>
            <person name="Liu J."/>
            <person name="Liuni S."/>
            <person name="McWilliam S."/>
            <person name="Madan Babu M."/>
            <person name="Madera M."/>
            <person name="Marchionni L."/>
            <person name="Matsuda H."/>
            <person name="Matsuzawa S."/>
            <person name="Miki H."/>
            <person name="Mignone F."/>
            <person name="Miyake S."/>
            <person name="Morris K."/>
            <person name="Mottagui-Tabar S."/>
            <person name="Mulder N."/>
            <person name="Nakano N."/>
            <person name="Nakauchi H."/>
            <person name="Ng P."/>
            <person name="Nilsson R."/>
            <person name="Nishiguchi S."/>
            <person name="Nishikawa S."/>
            <person name="Nori F."/>
            <person name="Ohara O."/>
            <person name="Okazaki Y."/>
            <person name="Orlando V."/>
            <person name="Pang K.C."/>
            <person name="Pavan W.J."/>
            <person name="Pavesi G."/>
            <person name="Pesole G."/>
            <person name="Petrovsky N."/>
            <person name="Piazza S."/>
            <person name="Reed J."/>
            <person name="Reid J.F."/>
            <person name="Ring B.Z."/>
            <person name="Ringwald M."/>
            <person name="Rost B."/>
            <person name="Ruan Y."/>
            <person name="Salzberg S.L."/>
            <person name="Sandelin A."/>
            <person name="Schneider C."/>
            <person name="Schoenbach C."/>
            <person name="Sekiguchi K."/>
            <person name="Semple C.A."/>
            <person name="Seno S."/>
            <person name="Sessa L."/>
            <person name="Sheng Y."/>
            <person name="Shibata Y."/>
            <person name="Shimada H."/>
            <person name="Shimada K."/>
            <person name="Silva D."/>
            <person name="Sinclair B."/>
            <person name="Sperling S."/>
            <person name="Stupka E."/>
            <person name="Sugiura K."/>
            <person name="Sultana R."/>
            <person name="Takenaka Y."/>
            <person name="Taki K."/>
            <person name="Tammoja K."/>
            <person name="Tan S.L."/>
            <person name="Tang S."/>
            <person name="Taylor M.S."/>
            <person name="Tegner J."/>
            <person name="Teichmann S.A."/>
            <person name="Ueda H.R."/>
            <person name="van Nimwegen E."/>
            <person name="Verardo R."/>
            <person name="Wei C.L."/>
            <person name="Yagi K."/>
            <person name="Yamanishi H."/>
            <person name="Zabarovsky E."/>
            <person name="Zhu S."/>
            <person name="Zimmer A."/>
            <person name="Hide W."/>
            <person name="Bult C."/>
            <person name="Grimmond S.M."/>
            <person name="Teasdale R.D."/>
            <person name="Liu E.T."/>
            <person name="Brusic V."/>
            <person name="Quackenbush J."/>
            <person name="Wahlestedt C."/>
            <person name="Mattick J.S."/>
            <person name="Hume D.A."/>
            <person name="Kai C."/>
            <person name="Sasaki D."/>
            <person name="Tomaru Y."/>
            <person name="Fukuda S."/>
            <person name="Kanamori-Katayama M."/>
            <person name="Suzuki M."/>
            <person name="Aoki J."/>
            <person name="Arakawa T."/>
            <person name="Iida J."/>
            <person name="Imamura K."/>
            <person name="Itoh M."/>
            <person name="Kato T."/>
            <person name="Kawaji H."/>
            <person name="Kawagashira N."/>
            <person name="Kawashima T."/>
            <person name="Kojima M."/>
            <person name="Kondo S."/>
            <person name="Konno H."/>
            <person name="Nakano K."/>
            <person name="Ninomiya N."/>
            <person name="Nishio T."/>
            <person name="Okada M."/>
            <person name="Plessy C."/>
            <person name="Shibata K."/>
            <person name="Shiraki T."/>
            <person name="Suzuki S."/>
            <person name="Tagami M."/>
            <person name="Waki K."/>
            <person name="Watahiki A."/>
            <person name="Okamura-Oho Y."/>
            <person name="Suzuki H."/>
            <person name="Kawai J."/>
            <person name="Hayashizaki Y."/>
        </authorList>
    </citation>
    <scope>NUCLEOTIDE SEQUENCE [LARGE SCALE MRNA]</scope>
    <source>
        <strain>C57BL/6J</strain>
        <strain>NOD</strain>
        <tissue>Bone marrow</tissue>
        <tissue>Spleen</tissue>
    </source>
</reference>
<reference key="4">
    <citation type="submission" date="2005-07" db="EMBL/GenBank/DDBJ databases">
        <authorList>
            <person name="Mural R.J."/>
            <person name="Adams M.D."/>
            <person name="Myers E.W."/>
            <person name="Smith H.O."/>
            <person name="Venter J.C."/>
        </authorList>
    </citation>
    <scope>NUCLEOTIDE SEQUENCE [LARGE SCALE GENOMIC DNA]</scope>
</reference>
<reference key="5">
    <citation type="journal article" date="2001" name="Oncogene">
        <title>Association of UNP, a ubiquitin-specific protease, with the pocket proteins pRb, p107 and p130.</title>
        <authorList>
            <person name="Blanchette P."/>
            <person name="Gilchrist C.A."/>
            <person name="Baker R.T."/>
            <person name="Gray D.A."/>
        </authorList>
    </citation>
    <scope>INTERACTION WITH RB1; RBL1 AND RBL2</scope>
    <scope>MUTAGENESIS OF CYS-461</scope>
</reference>
<reference key="6">
    <citation type="journal article" date="2005" name="J. Biol. Chem.">
        <title>Nuclear-cytoplasmic shuttling of the oncogenic mouse UNP/USP4 deubiquitylating enzyme.</title>
        <authorList>
            <person name="Soboleva T.A."/>
            <person name="Jans D.A."/>
            <person name="Johnson-Saliba M."/>
            <person name="Baker R.T."/>
        </authorList>
    </citation>
    <scope>SUBCELLULAR LOCATION</scope>
    <scope>TISSUE SPECIFICITY</scope>
    <scope>NUCLEAR LOCALIZATION SIGNAL</scope>
    <scope>MUTAGENESIS OF 770-GLN--LYS-771</scope>
</reference>
<reference key="7">
    <citation type="journal article" date="2010" name="Cell">
        <title>A tissue-specific atlas of mouse protein phosphorylation and expression.</title>
        <authorList>
            <person name="Huttlin E.L."/>
            <person name="Jedrychowski M.P."/>
            <person name="Elias J.E."/>
            <person name="Goswami T."/>
            <person name="Rad R."/>
            <person name="Beausoleil S.A."/>
            <person name="Villen J."/>
            <person name="Haas W."/>
            <person name="Sowa M.E."/>
            <person name="Gygi S.P."/>
        </authorList>
    </citation>
    <scope>PHOSPHORYLATION [LARGE SCALE ANALYSIS] AT SER-675 AND SER-680</scope>
    <scope>IDENTIFICATION BY MASS SPECTROMETRY [LARGE SCALE ANALYSIS]</scope>
    <source>
        <tissue>Brain</tissue>
        <tissue>Brown adipose tissue</tissue>
        <tissue>Heart</tissue>
        <tissue>Kidney</tissue>
        <tissue>Liver</tissue>
        <tissue>Lung</tissue>
        <tissue>Pancreas</tissue>
        <tissue>Spleen</tissue>
        <tissue>Testis</tissue>
    </source>
</reference>
<reference key="8">
    <citation type="submission" date="2009-11" db="PDB data bank">
        <title>Crystal structure of the N-terminal domains of the ubiquitin specific peptidase 4 (USP4).</title>
        <authorList>
            <consortium name="Structural genomics consortium (SGC)"/>
        </authorList>
    </citation>
    <scope>X-RAY CRYSTALLOGRAPHY (2.37 ANGSTROMS) OF 1-229</scope>
</reference>
<proteinExistence type="evidence at protein level"/>
<evidence type="ECO:0000250" key="1">
    <source>
        <dbReference type="UniProtKB" id="B2GUZ1"/>
    </source>
</evidence>
<evidence type="ECO:0000250" key="2">
    <source>
        <dbReference type="UniProtKB" id="Q13107"/>
    </source>
</evidence>
<evidence type="ECO:0000255" key="3"/>
<evidence type="ECO:0000255" key="4">
    <source>
        <dbReference type="PROSITE-ProRule" id="PRU00613"/>
    </source>
</evidence>
<evidence type="ECO:0000255" key="5">
    <source>
        <dbReference type="PROSITE-ProRule" id="PRU01035"/>
    </source>
</evidence>
<evidence type="ECO:0000256" key="6">
    <source>
        <dbReference type="SAM" id="MobiDB-lite"/>
    </source>
</evidence>
<evidence type="ECO:0000269" key="7">
    <source>
    </source>
</evidence>
<evidence type="ECO:0000269" key="8">
    <source>
    </source>
</evidence>
<evidence type="ECO:0000305" key="9"/>
<evidence type="ECO:0007744" key="10">
    <source>
    </source>
</evidence>
<evidence type="ECO:0007829" key="11">
    <source>
        <dbReference type="PDB" id="3JYU"/>
    </source>
</evidence>
<dbReference type="EC" id="3.4.19.12" evidence="2"/>
<dbReference type="EMBL" id="L00681">
    <property type="protein sequence ID" value="AAB82339.1"/>
    <property type="molecule type" value="mRNA"/>
</dbReference>
<dbReference type="EMBL" id="AF026469">
    <property type="protein sequence ID" value="AAC53587.1"/>
    <property type="molecule type" value="Genomic_DNA"/>
</dbReference>
<dbReference type="EMBL" id="AK089425">
    <property type="protein sequence ID" value="BAC40877.1"/>
    <property type="molecule type" value="mRNA"/>
</dbReference>
<dbReference type="EMBL" id="AK143582">
    <property type="protein sequence ID" value="BAE25450.1"/>
    <property type="molecule type" value="mRNA"/>
</dbReference>
<dbReference type="EMBL" id="AK149964">
    <property type="protein sequence ID" value="BAE29198.1"/>
    <property type="molecule type" value="mRNA"/>
</dbReference>
<dbReference type="EMBL" id="AK169933">
    <property type="protein sequence ID" value="BAE41468.1"/>
    <property type="molecule type" value="mRNA"/>
</dbReference>
<dbReference type="EMBL" id="AK171271">
    <property type="protein sequence ID" value="BAE42357.1"/>
    <property type="molecule type" value="mRNA"/>
</dbReference>
<dbReference type="EMBL" id="CH466560">
    <property type="protein sequence ID" value="EDL21282.1"/>
    <property type="molecule type" value="Genomic_DNA"/>
</dbReference>
<dbReference type="CCDS" id="CCDS23523.1"/>
<dbReference type="PIR" id="I58376">
    <property type="entry name" value="I58376"/>
</dbReference>
<dbReference type="RefSeq" id="NP_035808.2">
    <property type="nucleotide sequence ID" value="NM_011678.2"/>
</dbReference>
<dbReference type="PDB" id="3JYU">
    <property type="method" value="X-ray"/>
    <property type="resolution" value="2.37 A"/>
    <property type="chains" value="A/B=1-229"/>
</dbReference>
<dbReference type="PDBsum" id="3JYU"/>
<dbReference type="SMR" id="P35123"/>
<dbReference type="BioGRID" id="204448">
    <property type="interactions" value="3"/>
</dbReference>
<dbReference type="FunCoup" id="P35123">
    <property type="interactions" value="4697"/>
</dbReference>
<dbReference type="IntAct" id="P35123">
    <property type="interactions" value="1"/>
</dbReference>
<dbReference type="STRING" id="10090.ENSMUSP00000035237"/>
<dbReference type="MEROPS" id="C19.010"/>
<dbReference type="GlyGen" id="P35123">
    <property type="glycosylation" value="2 sites, 1 N-linked glycan (1 site), 1 O-linked glycan (1 site)"/>
</dbReference>
<dbReference type="iPTMnet" id="P35123"/>
<dbReference type="PhosphoSitePlus" id="P35123"/>
<dbReference type="SwissPalm" id="P35123"/>
<dbReference type="jPOST" id="P35123"/>
<dbReference type="PaxDb" id="10090-ENSMUSP00000035237"/>
<dbReference type="PeptideAtlas" id="P35123"/>
<dbReference type="ProteomicsDB" id="298366"/>
<dbReference type="Pumba" id="P35123"/>
<dbReference type="Antibodypedia" id="13556">
    <property type="antibodies" value="376 antibodies from 31 providers"/>
</dbReference>
<dbReference type="DNASU" id="22258"/>
<dbReference type="Ensembl" id="ENSMUST00000035237.12">
    <property type="protein sequence ID" value="ENSMUSP00000035237.7"/>
    <property type="gene ID" value="ENSMUSG00000032612.15"/>
</dbReference>
<dbReference type="GeneID" id="22258"/>
<dbReference type="KEGG" id="mmu:22258"/>
<dbReference type="UCSC" id="uc009rph.2">
    <property type="organism name" value="mouse"/>
</dbReference>
<dbReference type="AGR" id="MGI:98905"/>
<dbReference type="CTD" id="7375"/>
<dbReference type="MGI" id="MGI:98905">
    <property type="gene designation" value="Usp4"/>
</dbReference>
<dbReference type="VEuPathDB" id="HostDB:ENSMUSG00000032612"/>
<dbReference type="eggNOG" id="KOG1870">
    <property type="taxonomic scope" value="Eukaryota"/>
</dbReference>
<dbReference type="GeneTree" id="ENSGT00940000156645"/>
<dbReference type="InParanoid" id="P35123"/>
<dbReference type="OMA" id="KQQHSPN"/>
<dbReference type="OrthoDB" id="265776at2759"/>
<dbReference type="PhylomeDB" id="P35123"/>
<dbReference type="TreeFam" id="TF106276"/>
<dbReference type="Reactome" id="R-MMU-5357786">
    <property type="pathway name" value="TNFR1-induced proapoptotic signaling"/>
</dbReference>
<dbReference type="Reactome" id="R-MMU-5357905">
    <property type="pathway name" value="Regulation of TNFR1 signaling"/>
</dbReference>
<dbReference type="Reactome" id="R-MMU-5357956">
    <property type="pathway name" value="TNFR1-induced NF-kappa-B signaling pathway"/>
</dbReference>
<dbReference type="Reactome" id="R-MMU-5689880">
    <property type="pathway name" value="Ub-specific processing proteases"/>
</dbReference>
<dbReference type="BioGRID-ORCS" id="22258">
    <property type="hits" value="0 hits in 77 CRISPR screens"/>
</dbReference>
<dbReference type="ChiTaRS" id="Usp4">
    <property type="organism name" value="mouse"/>
</dbReference>
<dbReference type="EvolutionaryTrace" id="P35123"/>
<dbReference type="PRO" id="PR:P35123"/>
<dbReference type="Proteomes" id="UP000000589">
    <property type="component" value="Chromosome 9"/>
</dbReference>
<dbReference type="RNAct" id="P35123">
    <property type="molecule type" value="protein"/>
</dbReference>
<dbReference type="Bgee" id="ENSMUSG00000032612">
    <property type="expression patterns" value="Expressed in spermatid and 152 other cell types or tissues"/>
</dbReference>
<dbReference type="ExpressionAtlas" id="P35123">
    <property type="expression patterns" value="baseline and differential"/>
</dbReference>
<dbReference type="GO" id="GO:0005737">
    <property type="term" value="C:cytoplasm"/>
    <property type="evidence" value="ECO:0000250"/>
    <property type="project" value="UniProtKB"/>
</dbReference>
<dbReference type="GO" id="GO:0005634">
    <property type="term" value="C:nucleus"/>
    <property type="evidence" value="ECO:0000250"/>
    <property type="project" value="UniProtKB"/>
</dbReference>
<dbReference type="GO" id="GO:0031685">
    <property type="term" value="F:adenosine receptor binding"/>
    <property type="evidence" value="ECO:0007669"/>
    <property type="project" value="Ensembl"/>
</dbReference>
<dbReference type="GO" id="GO:0004843">
    <property type="term" value="F:cysteine-type deubiquitinase activity"/>
    <property type="evidence" value="ECO:0000250"/>
    <property type="project" value="UniProtKB"/>
</dbReference>
<dbReference type="GO" id="GO:0042802">
    <property type="term" value="F:identical protein binding"/>
    <property type="evidence" value="ECO:0007669"/>
    <property type="project" value="Ensembl"/>
</dbReference>
<dbReference type="GO" id="GO:0046872">
    <property type="term" value="F:metal ion binding"/>
    <property type="evidence" value="ECO:0007669"/>
    <property type="project" value="UniProtKB-KW"/>
</dbReference>
<dbReference type="GO" id="GO:0031397">
    <property type="term" value="P:negative regulation of protein ubiquitination"/>
    <property type="evidence" value="ECO:0000250"/>
    <property type="project" value="UniProtKB"/>
</dbReference>
<dbReference type="GO" id="GO:1904263">
    <property type="term" value="P:positive regulation of TORC1 signaling"/>
    <property type="evidence" value="ECO:0000250"/>
    <property type="project" value="UniProtKB"/>
</dbReference>
<dbReference type="GO" id="GO:0016579">
    <property type="term" value="P:protein deubiquitination"/>
    <property type="evidence" value="ECO:0000250"/>
    <property type="project" value="UniProtKB"/>
</dbReference>
<dbReference type="GO" id="GO:0034394">
    <property type="term" value="P:protein localization to cell surface"/>
    <property type="evidence" value="ECO:0000250"/>
    <property type="project" value="UniProtKB"/>
</dbReference>
<dbReference type="GO" id="GO:0006508">
    <property type="term" value="P:proteolysis"/>
    <property type="evidence" value="ECO:0007669"/>
    <property type="project" value="UniProtKB-KW"/>
</dbReference>
<dbReference type="GO" id="GO:0031647">
    <property type="term" value="P:regulation of protein stability"/>
    <property type="evidence" value="ECO:0000250"/>
    <property type="project" value="UniProtKB"/>
</dbReference>
<dbReference type="GO" id="GO:0000244">
    <property type="term" value="P:spliceosomal tri-snRNP complex assembly"/>
    <property type="evidence" value="ECO:0000250"/>
    <property type="project" value="UniProtKB"/>
</dbReference>
<dbReference type="CDD" id="cd02674">
    <property type="entry name" value="Peptidase_C19R"/>
    <property type="match status" value="1"/>
</dbReference>
<dbReference type="FunFam" id="3.30.2230.10:FF:000003">
    <property type="entry name" value="ubiquitin carboxyl-terminal hydrolase 15 isoform X1"/>
    <property type="match status" value="1"/>
</dbReference>
<dbReference type="FunFam" id="3.90.70.10:FF:000013">
    <property type="entry name" value="ubiquitin carboxyl-terminal hydrolase 15 isoform X1"/>
    <property type="match status" value="1"/>
</dbReference>
<dbReference type="FunFam" id="3.10.20.90:FF:000020">
    <property type="entry name" value="ubiquitin carboxyl-terminal hydrolase 15 isoform X2"/>
    <property type="match status" value="1"/>
</dbReference>
<dbReference type="FunFam" id="3.90.70.10:FF:000047">
    <property type="entry name" value="ubiquitin carboxyl-terminal hydrolase 4 isoform X2"/>
    <property type="match status" value="1"/>
</dbReference>
<dbReference type="Gene3D" id="3.90.70.10">
    <property type="entry name" value="Cysteine proteinases"/>
    <property type="match status" value="2"/>
</dbReference>
<dbReference type="Gene3D" id="3.30.2230.10">
    <property type="entry name" value="DUSP-like"/>
    <property type="match status" value="1"/>
</dbReference>
<dbReference type="Gene3D" id="3.10.20.90">
    <property type="entry name" value="Phosphatidylinositol 3-kinase Catalytic Subunit, Chain A, domain 1"/>
    <property type="match status" value="1"/>
</dbReference>
<dbReference type="InterPro" id="IPR035927">
    <property type="entry name" value="DUSP-like_sf"/>
</dbReference>
<dbReference type="InterPro" id="IPR038765">
    <property type="entry name" value="Papain-like_cys_pep_sf"/>
</dbReference>
<dbReference type="InterPro" id="IPR006615">
    <property type="entry name" value="Pept_C19_DUSP"/>
</dbReference>
<dbReference type="InterPro" id="IPR001394">
    <property type="entry name" value="Peptidase_C19_UCH"/>
</dbReference>
<dbReference type="InterPro" id="IPR050185">
    <property type="entry name" value="Ub_carboxyl-term_hydrolase"/>
</dbReference>
<dbReference type="InterPro" id="IPR028135">
    <property type="entry name" value="Ub_USP-typ"/>
</dbReference>
<dbReference type="InterPro" id="IPR018200">
    <property type="entry name" value="USP_CS"/>
</dbReference>
<dbReference type="InterPro" id="IPR028889">
    <property type="entry name" value="USP_dom"/>
</dbReference>
<dbReference type="PANTHER" id="PTHR21646">
    <property type="entry name" value="UBIQUITIN CARBOXYL-TERMINAL HYDROLASE"/>
    <property type="match status" value="1"/>
</dbReference>
<dbReference type="PANTHER" id="PTHR21646:SF45">
    <property type="entry name" value="UBIQUITIN CARBOXYL-TERMINAL HYDROLASE 4"/>
    <property type="match status" value="1"/>
</dbReference>
<dbReference type="Pfam" id="PF06337">
    <property type="entry name" value="DUSP"/>
    <property type="match status" value="1"/>
</dbReference>
<dbReference type="Pfam" id="PF14836">
    <property type="entry name" value="Ubiquitin_3"/>
    <property type="match status" value="1"/>
</dbReference>
<dbReference type="Pfam" id="PF00443">
    <property type="entry name" value="UCH"/>
    <property type="match status" value="1"/>
</dbReference>
<dbReference type="SMART" id="SM00695">
    <property type="entry name" value="DUSP"/>
    <property type="match status" value="1"/>
</dbReference>
<dbReference type="SUPFAM" id="SSF54001">
    <property type="entry name" value="Cysteine proteinases"/>
    <property type="match status" value="1"/>
</dbReference>
<dbReference type="SUPFAM" id="SSF143791">
    <property type="entry name" value="DUSP-like"/>
    <property type="match status" value="1"/>
</dbReference>
<dbReference type="PROSITE" id="PS51283">
    <property type="entry name" value="DUSP"/>
    <property type="match status" value="1"/>
</dbReference>
<dbReference type="PROSITE" id="PS00972">
    <property type="entry name" value="USP_1"/>
    <property type="match status" value="1"/>
</dbReference>
<dbReference type="PROSITE" id="PS00973">
    <property type="entry name" value="USP_2"/>
    <property type="match status" value="1"/>
</dbReference>
<dbReference type="PROSITE" id="PS50235">
    <property type="entry name" value="USP_3"/>
    <property type="match status" value="1"/>
</dbReference>
<organism>
    <name type="scientific">Mus musculus</name>
    <name type="common">Mouse</name>
    <dbReference type="NCBI Taxonomy" id="10090"/>
    <lineage>
        <taxon>Eukaryota</taxon>
        <taxon>Metazoa</taxon>
        <taxon>Chordata</taxon>
        <taxon>Craniata</taxon>
        <taxon>Vertebrata</taxon>
        <taxon>Euteleostomi</taxon>
        <taxon>Mammalia</taxon>
        <taxon>Eutheria</taxon>
        <taxon>Euarchontoglires</taxon>
        <taxon>Glires</taxon>
        <taxon>Rodentia</taxon>
        <taxon>Myomorpha</taxon>
        <taxon>Muroidea</taxon>
        <taxon>Muridae</taxon>
        <taxon>Murinae</taxon>
        <taxon>Mus</taxon>
        <taxon>Mus</taxon>
    </lineage>
</organism>